<dbReference type="EC" id="3.2.2.5" evidence="4"/>
<dbReference type="EMBL" id="JEYH01000003">
    <property type="protein sequence ID" value="EXE88617.1"/>
    <property type="molecule type" value="Genomic_DNA"/>
</dbReference>
<dbReference type="RefSeq" id="WP_032061149.1">
    <property type="nucleotide sequence ID" value="NZ_JEYH01000003.1"/>
</dbReference>
<dbReference type="SMR" id="P0DW59"/>
<dbReference type="GO" id="GO:0016787">
    <property type="term" value="F:hydrolase activity"/>
    <property type="evidence" value="ECO:0007669"/>
    <property type="project" value="UniProtKB-KW"/>
</dbReference>
<dbReference type="GO" id="GO:0000166">
    <property type="term" value="F:nucleotide binding"/>
    <property type="evidence" value="ECO:0007669"/>
    <property type="project" value="UniProtKB-KW"/>
</dbReference>
<dbReference type="GO" id="GO:0051607">
    <property type="term" value="P:defense response to virus"/>
    <property type="evidence" value="ECO:0007669"/>
    <property type="project" value="UniProtKB-KW"/>
</dbReference>
<dbReference type="CDD" id="cd01406">
    <property type="entry name" value="SIR2-like"/>
    <property type="match status" value="1"/>
</dbReference>
<dbReference type="InterPro" id="IPR029035">
    <property type="entry name" value="DHS-like_NAD/FAD-binding_dom"/>
</dbReference>
<dbReference type="InterPro" id="IPR026590">
    <property type="entry name" value="Ssirtuin_cat_dom"/>
</dbReference>
<dbReference type="InterPro" id="IPR041486">
    <property type="entry name" value="ThsA_STALD"/>
</dbReference>
<dbReference type="Pfam" id="PF13289">
    <property type="entry name" value="SIR2_2"/>
    <property type="match status" value="1"/>
</dbReference>
<dbReference type="Pfam" id="PF18185">
    <property type="entry name" value="STALD"/>
    <property type="match status" value="1"/>
</dbReference>
<dbReference type="SUPFAM" id="SSF52467">
    <property type="entry name" value="DHS-like NAD/FAD-binding domain"/>
    <property type="match status" value="1"/>
</dbReference>
<dbReference type="PROSITE" id="PS50305">
    <property type="entry name" value="SIRTUIN"/>
    <property type="match status" value="1"/>
</dbReference>
<protein>
    <recommendedName>
        <fullName evidence="5">NAD(+) hydrolase ThsA</fullName>
        <shortName evidence="5">AbThsA</shortName>
        <shortName evidence="5">NADase ThsA</shortName>
        <ecNumber evidence="4">3.2.2.5</ecNumber>
    </recommendedName>
</protein>
<keyword id="KW-0051">Antiviral defense</keyword>
<keyword id="KW-0378">Hydrolase</keyword>
<keyword id="KW-0520">NAD</keyword>
<keyword id="KW-0547">Nucleotide-binding</keyword>
<feature type="chain" id="PRO_0000457987" description="NAD(+) hydrolase ThsA">
    <location>
        <begin position="1"/>
        <end position="482"/>
    </location>
</feature>
<feature type="domain" description="Deacetylase sirtuin-type" evidence="3">
    <location>
        <begin position="3"/>
        <end position="281"/>
    </location>
</feature>
<feature type="region of interest" description="SLOG (STALD) domain" evidence="7">
    <location>
        <begin position="282"/>
        <end position="482"/>
    </location>
</feature>
<feature type="active site" description="Proton acceptor" evidence="1">
    <location>
        <position position="150"/>
    </location>
</feature>
<feature type="binding site" evidence="2">
    <location>
        <position position="112"/>
    </location>
    <ligand>
        <name>NAD(+)</name>
        <dbReference type="ChEBI" id="CHEBI:57540"/>
    </ligand>
</feature>
<feature type="binding site" evidence="2">
    <location>
        <position position="150"/>
    </location>
    <ligand>
        <name>NAD(+)</name>
        <dbReference type="ChEBI" id="CHEBI:57540"/>
    </ligand>
</feature>
<feature type="binding site" evidence="1">
    <location>
        <position position="287"/>
    </location>
    <ligand>
        <name>3'cADPR</name>
        <dbReference type="ChEBI" id="CHEBI:194249"/>
        <note>activator</note>
    </ligand>
</feature>
<feature type="binding site" evidence="1">
    <location>
        <position position="288"/>
    </location>
    <ligand>
        <name>3'cADPR</name>
        <dbReference type="ChEBI" id="CHEBI:194249"/>
        <note>activator</note>
    </ligand>
</feature>
<feature type="binding site" evidence="1">
    <location>
        <position position="324"/>
    </location>
    <ligand>
        <name>3'cADPR</name>
        <dbReference type="ChEBI" id="CHEBI:194249"/>
        <note>activator</note>
    </ligand>
</feature>
<feature type="binding site" evidence="1">
    <location>
        <position position="355"/>
    </location>
    <ligand>
        <name>3'cADPR</name>
        <dbReference type="ChEBI" id="CHEBI:194249"/>
        <note>activator</note>
    </ligand>
</feature>
<feature type="binding site" evidence="1">
    <location>
        <position position="373"/>
    </location>
    <ligand>
        <name>3'cADPR</name>
        <dbReference type="ChEBI" id="CHEBI:194249"/>
        <note>activator</note>
    </ligand>
</feature>
<feature type="binding site" evidence="1">
    <location>
        <position position="390"/>
    </location>
    <ligand>
        <name>3'cADPR</name>
        <dbReference type="ChEBI" id="CHEBI:194249"/>
        <note>activator</note>
    </ligand>
</feature>
<feature type="binding site" evidence="1">
    <location>
        <position position="407"/>
    </location>
    <ligand>
        <name>3'cADPR</name>
        <dbReference type="ChEBI" id="CHEBI:194249"/>
        <note>activator</note>
    </ligand>
</feature>
<feature type="binding site" evidence="1">
    <location>
        <position position="411"/>
    </location>
    <ligand>
        <name>3'cADPR</name>
        <dbReference type="ChEBI" id="CHEBI:194249"/>
        <note>activator</note>
    </ligand>
</feature>
<gene>
    <name evidence="5" type="primary">thsA</name>
    <name type="ORF">J591_1493</name>
</gene>
<organism>
    <name type="scientific">Acinetobacter baumannii (strain 532279)</name>
    <dbReference type="NCBI Taxonomy" id="1310692"/>
    <lineage>
        <taxon>Bacteria</taxon>
        <taxon>Pseudomonadati</taxon>
        <taxon>Pseudomonadota</taxon>
        <taxon>Gammaproteobacteria</taxon>
        <taxon>Moraxellales</taxon>
        <taxon>Moraxellaceae</taxon>
        <taxon>Acinetobacter</taxon>
        <taxon>Acinetobacter calcoaceticus/baumannii complex</taxon>
    </lineage>
</organism>
<reference key="1">
    <citation type="submission" date="2014-02" db="EMBL/GenBank/DDBJ databases">
        <title>Comparative genomics and transcriptomics to identify genetic mechanisms underlying the emergence of carbapenem resistant Acinetobacter baumannii (CRAb).</title>
        <authorList>
            <person name="Harris A.D."/>
            <person name="Johnson K.J."/>
            <person name="Nadendla S."/>
            <person name="Daugherty S.C."/>
            <person name="Parankush S."/>
            <person name="Sadzewicz L."/>
            <person name="Tallon L."/>
            <person name="Sengamalay N."/>
            <person name="Hazen T.H."/>
            <person name="Rasko D.A."/>
        </authorList>
    </citation>
    <scope>NUCLEOTIDE SEQUENCE [LARGE SCALE GENOMIC DNA]</scope>
    <source>
        <strain>532279</strain>
    </source>
</reference>
<reference key="2">
    <citation type="journal article" date="2022" name="Science">
        <title>Cyclic ADP ribose isomers: Production, chemical structures, and immune signaling.</title>
        <authorList>
            <person name="Manik M.K."/>
            <person name="Shi Y."/>
            <person name="Li S."/>
            <person name="Zaydman M.A."/>
            <person name="Damaraju N."/>
            <person name="Eastman S."/>
            <person name="Smith T.G."/>
            <person name="Gu W."/>
            <person name="Masic V."/>
            <person name="Mosaiab T."/>
            <person name="Weagley J.S."/>
            <person name="Hancock S.J."/>
            <person name="Vasquez E."/>
            <person name="Hartley-Tassell L."/>
            <person name="Kargios N."/>
            <person name="Maruta N."/>
            <person name="Lim B.Y.J."/>
            <person name="Burdett H."/>
            <person name="Landsberg M.J."/>
            <person name="Schembri M.A."/>
            <person name="Prokes I."/>
            <person name="Song L."/>
            <person name="Grant M."/>
            <person name="DiAntonio A."/>
            <person name="Nanson J.D."/>
            <person name="Guo M."/>
            <person name="Milbrandt J."/>
            <person name="Ve T."/>
            <person name="Kobe B."/>
        </authorList>
    </citation>
    <scope>FUNCTION</scope>
    <scope>CATALYTIC ACTIVITY</scope>
    <scope>SUBUNIT</scope>
    <scope>CADPR-BINDING</scope>
    <source>
        <strain>532279</strain>
    </source>
</reference>
<proteinExistence type="evidence at protein level"/>
<name>THSA_ACIB7</name>
<comment type="function">
    <text evidence="1 4">NAD(+) hydrolyzing component (NADase) of the Thoeris antiviral defense system, composed of ThsA and ThsB (maybe J591_1492). As purified, has NADase activity that is not activated by any tested cADPR isomers; binds 3'cADPR better than 2'cADPR. It was suggested the purified protein is already in a fully active state (PubMed:36048923). Upon activation binds and hydrolyzes NAD(+), leading to cell death and inhibition of phage replication (By similarity).</text>
</comment>
<comment type="catalytic activity">
    <reaction evidence="4">
        <text>NAD(+) + H2O = ADP-D-ribose + nicotinamide + H(+)</text>
        <dbReference type="Rhea" id="RHEA:16301"/>
        <dbReference type="ChEBI" id="CHEBI:15377"/>
        <dbReference type="ChEBI" id="CHEBI:15378"/>
        <dbReference type="ChEBI" id="CHEBI:17154"/>
        <dbReference type="ChEBI" id="CHEBI:57540"/>
        <dbReference type="ChEBI" id="CHEBI:57967"/>
        <dbReference type="EC" id="3.2.2.5"/>
    </reaction>
    <physiologicalReaction direction="left-to-right" evidence="4">
        <dbReference type="Rhea" id="RHEA:16302"/>
    </physiologicalReaction>
</comment>
<comment type="activity regulation">
    <text evidence="1 6">In vivo probably activated by a cyclic ADP-D-ribose generated by ThsB (might be 3'cADPR).</text>
</comment>
<comment type="subunit">
    <text evidence="4">Homotetramer in solution.</text>
</comment>
<comment type="domain">
    <text evidence="1 4 7">Has an N-terminal sirtuin-like domain (SIR2, residues 1-281) and a C-terminal SLOG (STALD)-like domain (residues 282-482) (PubMed:36048923). The SIR2 domain probably has NAD(+) hydrolase activity (Probable) (PubMed:36048923). The SLOG domain binds 3'cADPR; binding alters the protein conformation, allowing NAD(+) to access the active site (By similarity).</text>
</comment>
<comment type="similarity">
    <text evidence="6">Belongs to the soluble Thoeris ThsA family.</text>
</comment>
<evidence type="ECO:0000250" key="1">
    <source>
        <dbReference type="UniProtKB" id="J8G6Z1"/>
    </source>
</evidence>
<evidence type="ECO:0000250" key="2">
    <source>
        <dbReference type="UniProtKB" id="Q9WYW0"/>
    </source>
</evidence>
<evidence type="ECO:0000255" key="3">
    <source>
        <dbReference type="PROSITE-ProRule" id="PRU00236"/>
    </source>
</evidence>
<evidence type="ECO:0000269" key="4">
    <source>
    </source>
</evidence>
<evidence type="ECO:0000303" key="5">
    <source>
    </source>
</evidence>
<evidence type="ECO:0000305" key="6"/>
<evidence type="ECO:0000305" key="7">
    <source>
    </source>
</evidence>
<accession>P0DW59</accession>
<sequence>MFEHEQKIMIDRIVKELEENNFAIFAGAGLSAPAGYVNWKELLRPLSIELNLDIDKETDLVSLAQYYVNENHGRNRLTERLIDEVGVAREPTPNHKILAKLPISTYWTTNYDDLIEKALDNEGKIADKKFTKNHLSQTKKGRSAVVYKMHGDASLPDQAIITKDQYESYPLHFAPFVTALSGDLVSKTFLFLGFSFNDPNLDYILSRIRIHFEQNQRQHYCIFRKVNRADYSNDEDFSYNLLKQQFVIKDLARFSIKVVLIDAWNDLTRILEEITKRFRCKNVFLSGSAHEFGSWGQTATELFLSKLGEVLIQEGFKITSGLGLGIGNAFISGAIKEIYNRKYTKIDDYLTMKVFPQFVADPTERKNIWTAWRKDLLSQTGIALFFMGNKIIKDPESGKQTIVLADGMDEEFHIAHELGLKLIPIGASGYKAKELFNQIISDFDHYYPNSSPKFREAFEKLNEEVDEPVKLLSKIHDVIKLI</sequence>